<evidence type="ECO:0000255" key="1">
    <source>
        <dbReference type="HAMAP-Rule" id="MF_01194"/>
    </source>
</evidence>
<evidence type="ECO:0000256" key="2">
    <source>
        <dbReference type="SAM" id="MobiDB-lite"/>
    </source>
</evidence>
<proteinExistence type="inferred from homology"/>
<sequence length="105" mass="11779">MIASKFGIGQQVRHSLLGYLGVVVDIDPVYSLSEPSPDELAVNDELRAAPWYHVVMEDDNGLPVHTYLAEAQLSSELQDEHPEQPSMDELAQTIRKQLQAPRLRN</sequence>
<reference key="1">
    <citation type="journal article" date="2011" name="Proc. Natl. Acad. Sci. U.S.A.">
        <title>Genomic anatomy of Escherichia coli O157:H7 outbreaks.</title>
        <authorList>
            <person name="Eppinger M."/>
            <person name="Mammel M.K."/>
            <person name="Leclerc J.E."/>
            <person name="Ravel J."/>
            <person name="Cebula T.A."/>
        </authorList>
    </citation>
    <scope>NUCLEOTIDE SEQUENCE [LARGE SCALE GENOMIC DNA]</scope>
    <source>
        <strain>EC4115 / EHEC</strain>
    </source>
</reference>
<protein>
    <recommendedName>
        <fullName evidence="1">Heat shock protein HspQ</fullName>
    </recommendedName>
</protein>
<keyword id="KW-0963">Cytoplasm</keyword>
<keyword id="KW-0346">Stress response</keyword>
<organism>
    <name type="scientific">Escherichia coli O157:H7 (strain EC4115 / EHEC)</name>
    <dbReference type="NCBI Taxonomy" id="444450"/>
    <lineage>
        <taxon>Bacteria</taxon>
        <taxon>Pseudomonadati</taxon>
        <taxon>Pseudomonadota</taxon>
        <taxon>Gammaproteobacteria</taxon>
        <taxon>Enterobacterales</taxon>
        <taxon>Enterobacteriaceae</taxon>
        <taxon>Escherichia</taxon>
    </lineage>
</organism>
<feature type="chain" id="PRO_1000138404" description="Heat shock protein HspQ">
    <location>
        <begin position="1"/>
        <end position="105"/>
    </location>
</feature>
<feature type="region of interest" description="Disordered" evidence="2">
    <location>
        <begin position="75"/>
        <end position="105"/>
    </location>
</feature>
<comment type="function">
    <text evidence="1">Involved in the degradation of certain denaturated proteins, including DnaA, during heat shock stress.</text>
</comment>
<comment type="subcellular location">
    <subcellularLocation>
        <location evidence="1">Cytoplasm</location>
    </subcellularLocation>
</comment>
<comment type="similarity">
    <text evidence="1">Belongs to the HspQ family.</text>
</comment>
<gene>
    <name evidence="1" type="primary">hspQ</name>
    <name type="ordered locus">ECH74115_1131</name>
</gene>
<name>HSPQ_ECO5E</name>
<dbReference type="EMBL" id="CP001164">
    <property type="protein sequence ID" value="ACI36841.1"/>
    <property type="molecule type" value="Genomic_DNA"/>
</dbReference>
<dbReference type="RefSeq" id="WP_001295356.1">
    <property type="nucleotide sequence ID" value="NC_011353.1"/>
</dbReference>
<dbReference type="SMR" id="B5YT97"/>
<dbReference type="GeneID" id="93776448"/>
<dbReference type="KEGG" id="ecf:ECH74115_1131"/>
<dbReference type="HOGENOM" id="CLU_123865_1_0_6"/>
<dbReference type="GO" id="GO:0005737">
    <property type="term" value="C:cytoplasm"/>
    <property type="evidence" value="ECO:0007669"/>
    <property type="project" value="UniProtKB-SubCell"/>
</dbReference>
<dbReference type="GO" id="GO:0003677">
    <property type="term" value="F:DNA binding"/>
    <property type="evidence" value="ECO:0007669"/>
    <property type="project" value="InterPro"/>
</dbReference>
<dbReference type="GO" id="GO:0009408">
    <property type="term" value="P:response to heat"/>
    <property type="evidence" value="ECO:0007669"/>
    <property type="project" value="UniProtKB-UniRule"/>
</dbReference>
<dbReference type="Gene3D" id="2.30.30.390">
    <property type="entry name" value="Hemimethylated DNA-binding domain"/>
    <property type="match status" value="1"/>
</dbReference>
<dbReference type="HAMAP" id="MF_01194">
    <property type="entry name" value="HspQ"/>
    <property type="match status" value="1"/>
</dbReference>
<dbReference type="InterPro" id="IPR011722">
    <property type="entry name" value="Hemimethylated_DNA-bd_dom"/>
</dbReference>
<dbReference type="InterPro" id="IPR036623">
    <property type="entry name" value="Hemimethylated_DNA-bd_sf"/>
</dbReference>
<dbReference type="InterPro" id="IPR022866">
    <property type="entry name" value="HspQ"/>
</dbReference>
<dbReference type="NCBIfam" id="NF010729">
    <property type="entry name" value="PRK14129.1"/>
    <property type="match status" value="1"/>
</dbReference>
<dbReference type="NCBIfam" id="TIGR02097">
    <property type="entry name" value="yccV"/>
    <property type="match status" value="1"/>
</dbReference>
<dbReference type="Pfam" id="PF08755">
    <property type="entry name" value="YccV-like"/>
    <property type="match status" value="1"/>
</dbReference>
<dbReference type="SMART" id="SM00992">
    <property type="entry name" value="YccV-like"/>
    <property type="match status" value="1"/>
</dbReference>
<dbReference type="SUPFAM" id="SSF141255">
    <property type="entry name" value="YccV-like"/>
    <property type="match status" value="1"/>
</dbReference>
<accession>B5YT97</accession>